<reference key="1">
    <citation type="journal article" date="2015" name="Stem Cells Dev.">
        <title>The novel helicase helG (DHX30) is expressed during gastrulation in mice and has a structure similar to a human DExH box helicase.</title>
        <authorList>
            <person name="Zheng H.J."/>
            <person name="Tsukahara M."/>
            <person name="Liu E."/>
            <person name="Ye L."/>
            <person name="Xiong H."/>
            <person name="Noguchi S."/>
            <person name="Suzuki K."/>
            <person name="Ji Z.S."/>
        </authorList>
    </citation>
    <scope>NUCLEOTIDE SEQUENCE [MRNA] (ISOFORM 1)</scope>
    <scope>FUNCTION</scope>
    <scope>CATALYTIC ACTIVITY</scope>
    <scope>SUBCELLULAR LOCATION</scope>
    <scope>TISSUE SPECIFICITY</scope>
    <scope>DEVELOPMENTAL STAGE</scope>
    <source>
        <strain>C57BL/6J</strain>
        <tissue>CNS</tissue>
    </source>
</reference>
<reference key="2">
    <citation type="journal article" date="2005" name="Science">
        <title>The transcriptional landscape of the mammalian genome.</title>
        <authorList>
            <person name="Carninci P."/>
            <person name="Kasukawa T."/>
            <person name="Katayama S."/>
            <person name="Gough J."/>
            <person name="Frith M.C."/>
            <person name="Maeda N."/>
            <person name="Oyama R."/>
            <person name="Ravasi T."/>
            <person name="Lenhard B."/>
            <person name="Wells C."/>
            <person name="Kodzius R."/>
            <person name="Shimokawa K."/>
            <person name="Bajic V.B."/>
            <person name="Brenner S.E."/>
            <person name="Batalov S."/>
            <person name="Forrest A.R."/>
            <person name="Zavolan M."/>
            <person name="Davis M.J."/>
            <person name="Wilming L.G."/>
            <person name="Aidinis V."/>
            <person name="Allen J.E."/>
            <person name="Ambesi-Impiombato A."/>
            <person name="Apweiler R."/>
            <person name="Aturaliya R.N."/>
            <person name="Bailey T.L."/>
            <person name="Bansal M."/>
            <person name="Baxter L."/>
            <person name="Beisel K.W."/>
            <person name="Bersano T."/>
            <person name="Bono H."/>
            <person name="Chalk A.M."/>
            <person name="Chiu K.P."/>
            <person name="Choudhary V."/>
            <person name="Christoffels A."/>
            <person name="Clutterbuck D.R."/>
            <person name="Crowe M.L."/>
            <person name="Dalla E."/>
            <person name="Dalrymple B.P."/>
            <person name="de Bono B."/>
            <person name="Della Gatta G."/>
            <person name="di Bernardo D."/>
            <person name="Down T."/>
            <person name="Engstrom P."/>
            <person name="Fagiolini M."/>
            <person name="Faulkner G."/>
            <person name="Fletcher C.F."/>
            <person name="Fukushima T."/>
            <person name="Furuno M."/>
            <person name="Futaki S."/>
            <person name="Gariboldi M."/>
            <person name="Georgii-Hemming P."/>
            <person name="Gingeras T.R."/>
            <person name="Gojobori T."/>
            <person name="Green R.E."/>
            <person name="Gustincich S."/>
            <person name="Harbers M."/>
            <person name="Hayashi Y."/>
            <person name="Hensch T.K."/>
            <person name="Hirokawa N."/>
            <person name="Hill D."/>
            <person name="Huminiecki L."/>
            <person name="Iacono M."/>
            <person name="Ikeo K."/>
            <person name="Iwama A."/>
            <person name="Ishikawa T."/>
            <person name="Jakt M."/>
            <person name="Kanapin A."/>
            <person name="Katoh M."/>
            <person name="Kawasawa Y."/>
            <person name="Kelso J."/>
            <person name="Kitamura H."/>
            <person name="Kitano H."/>
            <person name="Kollias G."/>
            <person name="Krishnan S.P."/>
            <person name="Kruger A."/>
            <person name="Kummerfeld S.K."/>
            <person name="Kurochkin I.V."/>
            <person name="Lareau L.F."/>
            <person name="Lazarevic D."/>
            <person name="Lipovich L."/>
            <person name="Liu J."/>
            <person name="Liuni S."/>
            <person name="McWilliam S."/>
            <person name="Madan Babu M."/>
            <person name="Madera M."/>
            <person name="Marchionni L."/>
            <person name="Matsuda H."/>
            <person name="Matsuzawa S."/>
            <person name="Miki H."/>
            <person name="Mignone F."/>
            <person name="Miyake S."/>
            <person name="Morris K."/>
            <person name="Mottagui-Tabar S."/>
            <person name="Mulder N."/>
            <person name="Nakano N."/>
            <person name="Nakauchi H."/>
            <person name="Ng P."/>
            <person name="Nilsson R."/>
            <person name="Nishiguchi S."/>
            <person name="Nishikawa S."/>
            <person name="Nori F."/>
            <person name="Ohara O."/>
            <person name="Okazaki Y."/>
            <person name="Orlando V."/>
            <person name="Pang K.C."/>
            <person name="Pavan W.J."/>
            <person name="Pavesi G."/>
            <person name="Pesole G."/>
            <person name="Petrovsky N."/>
            <person name="Piazza S."/>
            <person name="Reed J."/>
            <person name="Reid J.F."/>
            <person name="Ring B.Z."/>
            <person name="Ringwald M."/>
            <person name="Rost B."/>
            <person name="Ruan Y."/>
            <person name="Salzberg S.L."/>
            <person name="Sandelin A."/>
            <person name="Schneider C."/>
            <person name="Schoenbach C."/>
            <person name="Sekiguchi K."/>
            <person name="Semple C.A."/>
            <person name="Seno S."/>
            <person name="Sessa L."/>
            <person name="Sheng Y."/>
            <person name="Shibata Y."/>
            <person name="Shimada H."/>
            <person name="Shimada K."/>
            <person name="Silva D."/>
            <person name="Sinclair B."/>
            <person name="Sperling S."/>
            <person name="Stupka E."/>
            <person name="Sugiura K."/>
            <person name="Sultana R."/>
            <person name="Takenaka Y."/>
            <person name="Taki K."/>
            <person name="Tammoja K."/>
            <person name="Tan S.L."/>
            <person name="Tang S."/>
            <person name="Taylor M.S."/>
            <person name="Tegner J."/>
            <person name="Teichmann S.A."/>
            <person name="Ueda H.R."/>
            <person name="van Nimwegen E."/>
            <person name="Verardo R."/>
            <person name="Wei C.L."/>
            <person name="Yagi K."/>
            <person name="Yamanishi H."/>
            <person name="Zabarovsky E."/>
            <person name="Zhu S."/>
            <person name="Zimmer A."/>
            <person name="Hide W."/>
            <person name="Bult C."/>
            <person name="Grimmond S.M."/>
            <person name="Teasdale R.D."/>
            <person name="Liu E.T."/>
            <person name="Brusic V."/>
            <person name="Quackenbush J."/>
            <person name="Wahlestedt C."/>
            <person name="Mattick J.S."/>
            <person name="Hume D.A."/>
            <person name="Kai C."/>
            <person name="Sasaki D."/>
            <person name="Tomaru Y."/>
            <person name="Fukuda S."/>
            <person name="Kanamori-Katayama M."/>
            <person name="Suzuki M."/>
            <person name="Aoki J."/>
            <person name="Arakawa T."/>
            <person name="Iida J."/>
            <person name="Imamura K."/>
            <person name="Itoh M."/>
            <person name="Kato T."/>
            <person name="Kawaji H."/>
            <person name="Kawagashira N."/>
            <person name="Kawashima T."/>
            <person name="Kojima M."/>
            <person name="Kondo S."/>
            <person name="Konno H."/>
            <person name="Nakano K."/>
            <person name="Ninomiya N."/>
            <person name="Nishio T."/>
            <person name="Okada M."/>
            <person name="Plessy C."/>
            <person name="Shibata K."/>
            <person name="Shiraki T."/>
            <person name="Suzuki S."/>
            <person name="Tagami M."/>
            <person name="Waki K."/>
            <person name="Watahiki A."/>
            <person name="Okamura-Oho Y."/>
            <person name="Suzuki H."/>
            <person name="Kawai J."/>
            <person name="Hayashizaki Y."/>
        </authorList>
    </citation>
    <scope>NUCLEOTIDE SEQUENCE [LARGE SCALE MRNA] (ISOFORM 2)</scope>
    <source>
        <strain>C57BL/6J</strain>
        <strain>DBA/2J</strain>
        <strain>NOD</strain>
        <tissue>Sympathetic ganglion</tissue>
        <tissue>Thymus</tissue>
    </source>
</reference>
<reference key="3">
    <citation type="journal article" date="2004" name="Genome Res.">
        <title>The status, quality, and expansion of the NIH full-length cDNA project: the Mammalian Gene Collection (MGC).</title>
        <authorList>
            <consortium name="The MGC Project Team"/>
        </authorList>
    </citation>
    <scope>NUCLEOTIDE SEQUENCE [LARGE SCALE MRNA] (ISOFORM 3)</scope>
    <source>
        <strain>C57BL/6J</strain>
        <strain>FVB/N</strain>
        <tissue>Eye</tissue>
        <tissue>Mammary tumor</tissue>
    </source>
</reference>
<reference key="4">
    <citation type="journal article" date="2010" name="Cell">
        <title>A tissue-specific atlas of mouse protein phosphorylation and expression.</title>
        <authorList>
            <person name="Huttlin E.L."/>
            <person name="Jedrychowski M.P."/>
            <person name="Elias J.E."/>
            <person name="Goswami T."/>
            <person name="Rad R."/>
            <person name="Beausoleil S.A."/>
            <person name="Villen J."/>
            <person name="Haas W."/>
            <person name="Sowa M.E."/>
            <person name="Gygi S.P."/>
        </authorList>
    </citation>
    <scope>PHOSPHORYLATION [LARGE SCALE ANALYSIS] AT SER-249</scope>
    <scope>IDENTIFICATION BY MASS SPECTROMETRY [LARGE SCALE ANALYSIS]</scope>
    <source>
        <tissue>Brain</tissue>
        <tissue>Brown adipose tissue</tissue>
        <tissue>Heart</tissue>
        <tissue>Kidney</tissue>
        <tissue>Liver</tissue>
        <tissue>Lung</tissue>
        <tissue>Pancreas</tissue>
        <tissue>Spleen</tissue>
        <tissue>Testis</tissue>
    </source>
</reference>
<dbReference type="EC" id="3.6.4.13" evidence="6"/>
<dbReference type="EMBL" id="AB047557">
    <property type="protein sequence ID" value="BAB32789.1"/>
    <property type="molecule type" value="mRNA"/>
</dbReference>
<dbReference type="EMBL" id="AK146326">
    <property type="protein sequence ID" value="BAE27081.1"/>
    <property type="molecule type" value="mRNA"/>
</dbReference>
<dbReference type="EMBL" id="AK148778">
    <property type="protein sequence ID" value="BAE28661.1"/>
    <property type="molecule type" value="mRNA"/>
</dbReference>
<dbReference type="EMBL" id="AK153969">
    <property type="protein sequence ID" value="BAE32286.1"/>
    <property type="molecule type" value="mRNA"/>
</dbReference>
<dbReference type="EMBL" id="BC004082">
    <property type="protein sequence ID" value="AAH04082.1"/>
    <property type="molecule type" value="mRNA"/>
</dbReference>
<dbReference type="EMBL" id="BC016202">
    <property type="protein sequence ID" value="AAH16202.1"/>
    <property type="molecule type" value="mRNA"/>
</dbReference>
<dbReference type="CCDS" id="CCDS23560.1">
    <molecule id="Q99PU8-1"/>
</dbReference>
<dbReference type="CCDS" id="CCDS57705.1">
    <molecule id="Q99PU8-3"/>
</dbReference>
<dbReference type="CCDS" id="CCDS57706.1">
    <molecule id="Q99PU8-2"/>
</dbReference>
<dbReference type="RefSeq" id="NP_001239611.1">
    <molecule id="Q99PU8-2"/>
    <property type="nucleotide sequence ID" value="NM_001252682.1"/>
</dbReference>
<dbReference type="RefSeq" id="NP_001239612.1">
    <molecule id="Q99PU8-3"/>
    <property type="nucleotide sequence ID" value="NM_001252683.1"/>
</dbReference>
<dbReference type="RefSeq" id="NP_579925.1">
    <molecule id="Q99PU8-1"/>
    <property type="nucleotide sequence ID" value="NM_133347.2"/>
</dbReference>
<dbReference type="RefSeq" id="XP_006512361.1">
    <molecule id="Q99PU8-1"/>
    <property type="nucleotide sequence ID" value="XM_006512298.5"/>
</dbReference>
<dbReference type="RefSeq" id="XP_006512362.1">
    <molecule id="Q99PU8-1"/>
    <property type="nucleotide sequence ID" value="XM_006512299.3"/>
</dbReference>
<dbReference type="RefSeq" id="XP_006512363.1">
    <molecule id="Q99PU8-1"/>
    <property type="nucleotide sequence ID" value="XM_006512300.3"/>
</dbReference>
<dbReference type="RefSeq" id="XP_006512364.1">
    <molecule id="Q99PU8-1"/>
    <property type="nucleotide sequence ID" value="XM_006512301.5"/>
</dbReference>
<dbReference type="RefSeq" id="XP_006512366.1">
    <molecule id="Q99PU8-2"/>
    <property type="nucleotide sequence ID" value="XM_006512303.3"/>
</dbReference>
<dbReference type="RefSeq" id="XP_006512367.1">
    <molecule id="Q99PU8-2"/>
    <property type="nucleotide sequence ID" value="XM_006512304.1"/>
</dbReference>
<dbReference type="RefSeq" id="XP_006512368.1">
    <molecule id="Q99PU8-2"/>
    <property type="nucleotide sequence ID" value="XM_006512305.5"/>
</dbReference>
<dbReference type="RefSeq" id="XP_011241331.1">
    <property type="nucleotide sequence ID" value="XM_011243029.2"/>
</dbReference>
<dbReference type="RefSeq" id="XP_017169102.1">
    <property type="nucleotide sequence ID" value="XM_017313613.1"/>
</dbReference>
<dbReference type="RefSeq" id="XP_017169103.1">
    <molecule id="Q99PU8-1"/>
    <property type="nucleotide sequence ID" value="XM_017313614.2"/>
</dbReference>
<dbReference type="RefSeq" id="XP_030100501.1">
    <molecule id="Q99PU8-2"/>
    <property type="nucleotide sequence ID" value="XM_030244641.2"/>
</dbReference>
<dbReference type="RefSeq" id="XP_036011214.1">
    <molecule id="Q99PU8-1"/>
    <property type="nucleotide sequence ID" value="XM_036155321.1"/>
</dbReference>
<dbReference type="RefSeq" id="XP_036011215.1">
    <molecule id="Q99PU8-1"/>
    <property type="nucleotide sequence ID" value="XM_036155322.1"/>
</dbReference>
<dbReference type="RefSeq" id="XP_036011216.1">
    <molecule id="Q99PU8-2"/>
    <property type="nucleotide sequence ID" value="XM_036155323.1"/>
</dbReference>
<dbReference type="RefSeq" id="XP_036011218.1">
    <molecule id="Q99PU8-2"/>
    <property type="nucleotide sequence ID" value="XM_036155325.1"/>
</dbReference>
<dbReference type="RefSeq" id="XP_036011219.1">
    <molecule id="Q99PU8-2"/>
    <property type="nucleotide sequence ID" value="XM_036155326.1"/>
</dbReference>
<dbReference type="SMR" id="Q99PU8"/>
<dbReference type="BioGRID" id="215593">
    <property type="interactions" value="12"/>
</dbReference>
<dbReference type="FunCoup" id="Q99PU8">
    <property type="interactions" value="3639"/>
</dbReference>
<dbReference type="IntAct" id="Q99PU8">
    <property type="interactions" value="3"/>
</dbReference>
<dbReference type="MINT" id="Q99PU8"/>
<dbReference type="STRING" id="10090.ENSMUSP00000062622"/>
<dbReference type="GlyGen" id="Q99PU8">
    <property type="glycosylation" value="2 sites, 1 O-linked glycan (2 sites)"/>
</dbReference>
<dbReference type="iPTMnet" id="Q99PU8"/>
<dbReference type="PhosphoSitePlus" id="Q99PU8"/>
<dbReference type="SwissPalm" id="Q99PU8"/>
<dbReference type="PaxDb" id="10090-ENSMUSP00000062622"/>
<dbReference type="PeptideAtlas" id="Q99PU8"/>
<dbReference type="ProteomicsDB" id="279650">
    <molecule id="Q99PU8-1"/>
</dbReference>
<dbReference type="ProteomicsDB" id="279651">
    <molecule id="Q99PU8-2"/>
</dbReference>
<dbReference type="ProteomicsDB" id="279652">
    <molecule id="Q99PU8-3"/>
</dbReference>
<dbReference type="Pumba" id="Q99PU8"/>
<dbReference type="Antibodypedia" id="13009">
    <property type="antibodies" value="163 antibodies from 23 providers"/>
</dbReference>
<dbReference type="DNASU" id="72831"/>
<dbReference type="Ensembl" id="ENSMUST00000062368.13">
    <molecule id="Q99PU8-3"/>
    <property type="protein sequence ID" value="ENSMUSP00000062622.7"/>
    <property type="gene ID" value="ENSMUSG00000032480.18"/>
</dbReference>
<dbReference type="Ensembl" id="ENSMUST00000111991.9">
    <molecule id="Q99PU8-2"/>
    <property type="protein sequence ID" value="ENSMUSP00000107622.3"/>
    <property type="gene ID" value="ENSMUSG00000032480.18"/>
</dbReference>
<dbReference type="Ensembl" id="ENSMUST00000165596.8">
    <molecule id="Q99PU8-1"/>
    <property type="protein sequence ID" value="ENSMUSP00000129174.2"/>
    <property type="gene ID" value="ENSMUSG00000032480.18"/>
</dbReference>
<dbReference type="Ensembl" id="ENSMUST00000197928.5">
    <molecule id="Q99PU8-2"/>
    <property type="protein sequence ID" value="ENSMUSP00000142549.2"/>
    <property type="gene ID" value="ENSMUSG00000032480.18"/>
</dbReference>
<dbReference type="Ensembl" id="ENSMUST00000198425.5">
    <molecule id="Q99PU8-1"/>
    <property type="protein sequence ID" value="ENSMUSP00000142659.2"/>
    <property type="gene ID" value="ENSMUSG00000032480.18"/>
</dbReference>
<dbReference type="Ensembl" id="ENSMUST00000199529.5">
    <molecule id="Q99PU8-2"/>
    <property type="protein sequence ID" value="ENSMUSP00000142489.2"/>
    <property type="gene ID" value="ENSMUSG00000032480.18"/>
</dbReference>
<dbReference type="Ensembl" id="ENSMUST00000200066.5">
    <molecule id="Q99PU8-2"/>
    <property type="protein sequence ID" value="ENSMUSP00000143371.2"/>
    <property type="gene ID" value="ENSMUSG00000032480.18"/>
</dbReference>
<dbReference type="GeneID" id="72831"/>
<dbReference type="KEGG" id="mmu:72831"/>
<dbReference type="UCSC" id="uc009rtg.2">
    <molecule id="Q99PU8-3"/>
    <property type="organism name" value="mouse"/>
</dbReference>
<dbReference type="UCSC" id="uc009rth.2">
    <molecule id="Q99PU8-1"/>
    <property type="organism name" value="mouse"/>
</dbReference>
<dbReference type="AGR" id="MGI:1920081"/>
<dbReference type="CTD" id="22907"/>
<dbReference type="MGI" id="MGI:1920081">
    <property type="gene designation" value="Dhx30"/>
</dbReference>
<dbReference type="VEuPathDB" id="HostDB:ENSMUSG00000032480"/>
<dbReference type="eggNOG" id="KOG0920">
    <property type="taxonomic scope" value="Eukaryota"/>
</dbReference>
<dbReference type="GeneTree" id="ENSGT00940000158279"/>
<dbReference type="InParanoid" id="Q99PU8"/>
<dbReference type="OrthoDB" id="54194at9989"/>
<dbReference type="PhylomeDB" id="Q99PU8"/>
<dbReference type="TreeFam" id="TF352030"/>
<dbReference type="BioGRID-ORCS" id="72831">
    <property type="hits" value="17 hits in 79 CRISPR screens"/>
</dbReference>
<dbReference type="CD-CODE" id="CE726F99">
    <property type="entry name" value="Postsynaptic density"/>
</dbReference>
<dbReference type="ChiTaRS" id="Dhx30">
    <property type="organism name" value="mouse"/>
</dbReference>
<dbReference type="PRO" id="PR:Q99PU8"/>
<dbReference type="Proteomes" id="UP000000589">
    <property type="component" value="Chromosome 9"/>
</dbReference>
<dbReference type="RNAct" id="Q99PU8">
    <property type="molecule type" value="protein"/>
</dbReference>
<dbReference type="Bgee" id="ENSMUSG00000032480">
    <property type="expression patterns" value="Expressed in rostral migratory stream and 266 other cell types or tissues"/>
</dbReference>
<dbReference type="ExpressionAtlas" id="Q99PU8">
    <property type="expression patterns" value="baseline and differential"/>
</dbReference>
<dbReference type="GO" id="GO:0005737">
    <property type="term" value="C:cytoplasm"/>
    <property type="evidence" value="ECO:0000314"/>
    <property type="project" value="UniProtKB"/>
</dbReference>
<dbReference type="GO" id="GO:0005829">
    <property type="term" value="C:cytosol"/>
    <property type="evidence" value="ECO:0007669"/>
    <property type="project" value="Ensembl"/>
</dbReference>
<dbReference type="GO" id="GO:0042645">
    <property type="term" value="C:mitochondrial nucleoid"/>
    <property type="evidence" value="ECO:0000250"/>
    <property type="project" value="UniProtKB"/>
</dbReference>
<dbReference type="GO" id="GO:0005739">
    <property type="term" value="C:mitochondrion"/>
    <property type="evidence" value="ECO:0000250"/>
    <property type="project" value="UniProtKB"/>
</dbReference>
<dbReference type="GO" id="GO:0035770">
    <property type="term" value="C:ribonucleoprotein granule"/>
    <property type="evidence" value="ECO:0000250"/>
    <property type="project" value="UniProtKB"/>
</dbReference>
<dbReference type="GO" id="GO:0005524">
    <property type="term" value="F:ATP binding"/>
    <property type="evidence" value="ECO:0007669"/>
    <property type="project" value="UniProtKB-KW"/>
</dbReference>
<dbReference type="GO" id="GO:0016887">
    <property type="term" value="F:ATP hydrolysis activity"/>
    <property type="evidence" value="ECO:0007669"/>
    <property type="project" value="RHEA"/>
</dbReference>
<dbReference type="GO" id="GO:0003682">
    <property type="term" value="F:chromatin binding"/>
    <property type="evidence" value="ECO:0000250"/>
    <property type="project" value="UniProtKB"/>
</dbReference>
<dbReference type="GO" id="GO:0003725">
    <property type="term" value="F:double-stranded RNA binding"/>
    <property type="evidence" value="ECO:0000266"/>
    <property type="project" value="MGI"/>
</dbReference>
<dbReference type="GO" id="GO:0003723">
    <property type="term" value="F:RNA binding"/>
    <property type="evidence" value="ECO:0000250"/>
    <property type="project" value="UniProtKB"/>
</dbReference>
<dbReference type="GO" id="GO:0003724">
    <property type="term" value="F:RNA helicase activity"/>
    <property type="evidence" value="ECO:0000314"/>
    <property type="project" value="UniProtKB"/>
</dbReference>
<dbReference type="GO" id="GO:0007417">
    <property type="term" value="P:central nervous system development"/>
    <property type="evidence" value="ECO:0000314"/>
    <property type="project" value="UniProtKB"/>
</dbReference>
<dbReference type="GO" id="GO:1902775">
    <property type="term" value="P:mitochondrial large ribosomal subunit assembly"/>
    <property type="evidence" value="ECO:0000250"/>
    <property type="project" value="UniProtKB"/>
</dbReference>
<dbReference type="CDD" id="cd17976">
    <property type="entry name" value="DEXHc_DHX30"/>
    <property type="match status" value="1"/>
</dbReference>
<dbReference type="CDD" id="cd18791">
    <property type="entry name" value="SF2_C_RHA"/>
    <property type="match status" value="1"/>
</dbReference>
<dbReference type="FunFam" id="1.20.120.1080:FF:000004">
    <property type="entry name" value="ATP-dependent RNA helicase DHX30 isoform X1"/>
    <property type="match status" value="1"/>
</dbReference>
<dbReference type="FunFam" id="3.30.160.20:FF:000016">
    <property type="entry name" value="ATP-dependent RNA helicase DHX30 isoform X1"/>
    <property type="match status" value="1"/>
</dbReference>
<dbReference type="FunFam" id="3.30.160.20:FF:000017">
    <property type="entry name" value="ATP-dependent RNA helicase DHX30 isoform X1"/>
    <property type="match status" value="1"/>
</dbReference>
<dbReference type="FunFam" id="3.40.50.300:FF:001703">
    <property type="entry name" value="DExH-box helicase 30"/>
    <property type="match status" value="1"/>
</dbReference>
<dbReference type="FunFam" id="3.40.50.300:FF:000375">
    <property type="entry name" value="Putative ATP-dependent RNA helicase DHX30"/>
    <property type="match status" value="1"/>
</dbReference>
<dbReference type="Gene3D" id="1.20.120.1080">
    <property type="match status" value="1"/>
</dbReference>
<dbReference type="Gene3D" id="3.30.160.20">
    <property type="match status" value="2"/>
</dbReference>
<dbReference type="Gene3D" id="3.40.50.300">
    <property type="entry name" value="P-loop containing nucleotide triphosphate hydrolases"/>
    <property type="match status" value="2"/>
</dbReference>
<dbReference type="InterPro" id="IPR011709">
    <property type="entry name" value="DEAD-box_helicase_OB_fold"/>
</dbReference>
<dbReference type="InterPro" id="IPR011545">
    <property type="entry name" value="DEAD/DEAH_box_helicase_dom"/>
</dbReference>
<dbReference type="InterPro" id="IPR002464">
    <property type="entry name" value="DNA/RNA_helicase_DEAH_CS"/>
</dbReference>
<dbReference type="InterPro" id="IPR056755">
    <property type="entry name" value="DSRM_2"/>
</dbReference>
<dbReference type="InterPro" id="IPR007502">
    <property type="entry name" value="Helicase-assoc_dom"/>
</dbReference>
<dbReference type="InterPro" id="IPR014001">
    <property type="entry name" value="Helicase_ATP-bd"/>
</dbReference>
<dbReference type="InterPro" id="IPR001650">
    <property type="entry name" value="Helicase_C-like"/>
</dbReference>
<dbReference type="InterPro" id="IPR027417">
    <property type="entry name" value="P-loop_NTPase"/>
</dbReference>
<dbReference type="PANTHER" id="PTHR18934">
    <property type="entry name" value="ATP-DEPENDENT RNA HELICASE"/>
    <property type="match status" value="1"/>
</dbReference>
<dbReference type="PANTHER" id="PTHR18934:SF257">
    <property type="entry name" value="ATP-DEPENDENT RNA HELICASE DHX30"/>
    <property type="match status" value="1"/>
</dbReference>
<dbReference type="Pfam" id="PF00270">
    <property type="entry name" value="DEAD"/>
    <property type="match status" value="1"/>
</dbReference>
<dbReference type="Pfam" id="PF24995">
    <property type="entry name" value="DSRM_2"/>
    <property type="match status" value="1"/>
</dbReference>
<dbReference type="Pfam" id="PF21010">
    <property type="entry name" value="HA2_C"/>
    <property type="match status" value="1"/>
</dbReference>
<dbReference type="Pfam" id="PF00271">
    <property type="entry name" value="Helicase_C"/>
    <property type="match status" value="1"/>
</dbReference>
<dbReference type="Pfam" id="PF07717">
    <property type="entry name" value="OB_NTP_bind"/>
    <property type="match status" value="1"/>
</dbReference>
<dbReference type="SMART" id="SM00487">
    <property type="entry name" value="DEXDc"/>
    <property type="match status" value="1"/>
</dbReference>
<dbReference type="SMART" id="SM00847">
    <property type="entry name" value="HA2"/>
    <property type="match status" value="1"/>
</dbReference>
<dbReference type="SMART" id="SM00490">
    <property type="entry name" value="HELICc"/>
    <property type="match status" value="1"/>
</dbReference>
<dbReference type="SUPFAM" id="SSF52540">
    <property type="entry name" value="P-loop containing nucleoside triphosphate hydrolases"/>
    <property type="match status" value="1"/>
</dbReference>
<dbReference type="PROSITE" id="PS00690">
    <property type="entry name" value="DEAH_ATP_HELICASE"/>
    <property type="match status" value="1"/>
</dbReference>
<dbReference type="PROSITE" id="PS51192">
    <property type="entry name" value="HELICASE_ATP_BIND_1"/>
    <property type="match status" value="1"/>
</dbReference>
<dbReference type="PROSITE" id="PS51194">
    <property type="entry name" value="HELICASE_CTER"/>
    <property type="match status" value="1"/>
</dbReference>
<accession>Q99PU8</accession>
<accession>Q3U4Z4</accession>
<accession>Q3UFA0</accession>
<accession>Q3UJS4</accession>
<accession>Q91WA7</accession>
<accession>Q99KN7</accession>
<keyword id="KW-0025">Alternative splicing</keyword>
<keyword id="KW-0067">ATP-binding</keyword>
<keyword id="KW-0963">Cytoplasm</keyword>
<keyword id="KW-0347">Helicase</keyword>
<keyword id="KW-0378">Hydrolase</keyword>
<keyword id="KW-0496">Mitochondrion</keyword>
<keyword id="KW-1135">Mitochondrion nucleoid</keyword>
<keyword id="KW-0547">Nucleotide-binding</keyword>
<keyword id="KW-0597">Phosphoprotein</keyword>
<keyword id="KW-1185">Reference proteome</keyword>
<keyword id="KW-0690">Ribosome biogenesis</keyword>
<keyword id="KW-0694">RNA-binding</keyword>
<gene>
    <name type="primary">Dhx30</name>
    <name evidence="9" type="synonym">Helg</name>
</gene>
<comment type="function">
    <text evidence="1 2 6">RNA-dependent helicase (PubMed:25219788). Plays an important role in the assembly of the mitochondrial large ribosomal subunit (By similarity). Required for optimal function of the zinc-finger antiviral protein ZC3HAV1 (By similarity). Associates with mitochondrial DNA (By similarity). Involved in nervous system development and differentiation through its involvement in the up-regulation of a number of genes which are required for neurogenesis, including GSC, NCAM1, neurogenin, and NEUROD (PubMed:25219788).</text>
</comment>
<comment type="catalytic activity">
    <reaction evidence="6">
        <text>ATP + H2O = ADP + phosphate + H(+)</text>
        <dbReference type="Rhea" id="RHEA:13065"/>
        <dbReference type="ChEBI" id="CHEBI:15377"/>
        <dbReference type="ChEBI" id="CHEBI:15378"/>
        <dbReference type="ChEBI" id="CHEBI:30616"/>
        <dbReference type="ChEBI" id="CHEBI:43474"/>
        <dbReference type="ChEBI" id="CHEBI:456216"/>
        <dbReference type="EC" id="3.6.4.13"/>
    </reaction>
</comment>
<comment type="subunit">
    <text evidence="1 2">Identified in a complex with TFAM and SSBP1. Interacts (via N-terminus) with ZC3HAV1 (via N-terminal domain) in an RNA-independent manner. Found in a complex with GRSF1, DDX28, FASTKD2 and FASTKD5.</text>
</comment>
<comment type="subcellular location">
    <subcellularLocation>
        <location evidence="6">Cytoplasm</location>
    </subcellularLocation>
    <subcellularLocation>
        <location evidence="2">Mitochondrion</location>
    </subcellularLocation>
    <subcellularLocation>
        <location evidence="2">Mitochondrion matrix</location>
        <location evidence="2">Mitochondrion nucleoid</location>
    </subcellularLocation>
    <text evidence="2">Localizes to mitochondrial RNA granules found in close proximity to the mitochondrial nucleoids. Relocalizes to stress granules upon heat stress.</text>
</comment>
<comment type="alternative products">
    <event type="alternative splicing"/>
    <isoform>
        <id>Q99PU8-1</id>
        <name>1</name>
        <sequence type="displayed"/>
    </isoform>
    <isoform>
        <id>Q99PU8-2</id>
        <name>2</name>
        <sequence type="described" ref="VSP_019747"/>
    </isoform>
    <isoform>
        <id>Q99PU8-3</id>
        <name>3</name>
        <sequence type="described" ref="VSP_019746"/>
    </isoform>
</comment>
<comment type="tissue specificity">
    <text evidence="6">Expressed in the heart, brain, spleen, lung, liver, skeletal muscle, kidney, and testis. Expression is strongest in the testis and brain, while the lowest levels of expression are found in the spleen and lung.</text>
</comment>
<comment type="developmental stage">
    <text evidence="6">Detected at low levels of expression at 3.5 and 6.5 days post coitum (dpc). At 7.5 dpc, it is detected in the ectoderm, mesoderm, and ectoplacental cone. By 8.5 dpc, expression is increased, specifically in the central nervous system, neural plate, and neural tube, which remains constant until 10.5 dpc where it decreases. By 11.5 to 15.5 dpc, expression is reduced further in the central nervous system.</text>
</comment>
<comment type="PTM">
    <molecule>Isoform 3</molecule>
    <text evidence="2">Phosphorylated on Ser-15.</text>
</comment>
<comment type="similarity">
    <text evidence="10">Belongs to the DEAD box helicase family. DEAH subfamily.</text>
</comment>
<sequence>MVTPVCNSSTWQPKDSSFLSWPEMFSLDSFRKDRTQHRQRQCKLPPPRLPPMCVNPAPGGTITRASRDLLKEFPQPKNLLNSVIGRALGISHAKDKLVYVHTNGPKKKKVTLHIKWPKSVEVEGYGSKKIDAERQAAAAACQLFKGWGLLGPRNELFDAAKYRVLADRFGSPADSWWRPEPTMPPTSWRQLNPENIRPGGPAGLSRSLGREEEEDEEEELEEGTIDVTEFLSMTQQDSHNPLRDSRGGSFEMTDDDSAIRALTQFPLPKNLLAKVIQIATSSSTAKNLMQFHTVGTKTKLATLTLLWPCPMTFVAKGRRKAEAENKAAALACKKLKSLGLVDRNNEPLTHAMYNLASLRELGETQRRPCTIQVPEPILRKIEAFLSHYPVDSSWISPELRLQSDDILPLGKDSGPLSDPITGKPYMPLSEAEEVRLSQSLLELWRRRGPIWQEAPQLPVDPHRDTILSAIEQHPVVVISGDTGCGKTTRIPQLLLERYVTEGRGARCNVIITQPRRISAVSVAQRVSHELGPSLRRNVGFQVRLESKPPARGGALLFCTVGILLRKLQSNPSLEGVSHVIVDEVHERDVNTDFLLILLKGLQRLNPALRLVLMSATGDNERFSRYFGGCPVIKVPGFMYPVKEHYLEDILAKLGKHQYPHRHRHHESEDECALDLDLVTDLVLHIDARGEPGGILCFLPGWQEIKGVQQRLQEALGMHESKYLILPVHSNIPMMDQKAIFQQPPLGVRKIVLATNIAETSITVNDIVHVVDSGLHKEERYDLKTKVSCLETVWVSRANVIQRRGRAGRCQSGFAYHLFPRSRLEKMVPFQVPEILRTPLENLVLQAKIHMPEKTAVEFLSKAVDSPNIKAVDEAVILLQEIGVLDQREYLTTLGQRLAHISTDPRLAKAIVLAAIFRCLHPLLVVVSCLTRDPFSSSLQNRAEVDKVKALLSHDSGSDHLAFVRAVAGWEEVLRWQDRTSRENYLEENLLYAPSLRFIHGLIKQFSENIYEAFLVGKPSDCTLPSAQCNEYSEEEELVKGVLMAGLYPNLIQVRQGKVTRQGKFKPNSVTYRTKSGNILLHKSTINREATRLRSRWLTYFMAVKSNGSVFVRDSSQVHPLAVLLLTDGDVHIRDDGRRATISLSDSDLLRLEGDSRTVRLLREFRRALGRMVERSLRSELAALPLSVQQEHGQLLALLAELLRGPCGSFDMRKTADD</sequence>
<protein>
    <recommendedName>
        <fullName evidence="10">ATP-dependent RNA helicase DHX30</fullName>
        <ecNumber evidence="6">3.6.4.13</ecNumber>
    </recommendedName>
    <alternativeName>
        <fullName>DEAH box protein 30</fullName>
    </alternativeName>
</protein>
<organism>
    <name type="scientific">Mus musculus</name>
    <name type="common">Mouse</name>
    <dbReference type="NCBI Taxonomy" id="10090"/>
    <lineage>
        <taxon>Eukaryota</taxon>
        <taxon>Metazoa</taxon>
        <taxon>Chordata</taxon>
        <taxon>Craniata</taxon>
        <taxon>Vertebrata</taxon>
        <taxon>Euteleostomi</taxon>
        <taxon>Mammalia</taxon>
        <taxon>Eutheria</taxon>
        <taxon>Euarchontoglires</taxon>
        <taxon>Glires</taxon>
        <taxon>Rodentia</taxon>
        <taxon>Myomorpha</taxon>
        <taxon>Muroidea</taxon>
        <taxon>Muridae</taxon>
        <taxon>Murinae</taxon>
        <taxon>Mus</taxon>
        <taxon>Mus</taxon>
    </lineage>
</organism>
<proteinExistence type="evidence at protein level"/>
<evidence type="ECO:0000250" key="1">
    <source>
        <dbReference type="UniProtKB" id="Q5BJS0"/>
    </source>
</evidence>
<evidence type="ECO:0000250" key="2">
    <source>
        <dbReference type="UniProtKB" id="Q7L2E3"/>
    </source>
</evidence>
<evidence type="ECO:0000255" key="3">
    <source>
        <dbReference type="PROSITE-ProRule" id="PRU00541"/>
    </source>
</evidence>
<evidence type="ECO:0000255" key="4">
    <source>
        <dbReference type="PROSITE-ProRule" id="PRU00542"/>
    </source>
</evidence>
<evidence type="ECO:0000256" key="5">
    <source>
        <dbReference type="SAM" id="MobiDB-lite"/>
    </source>
</evidence>
<evidence type="ECO:0000269" key="6">
    <source>
    </source>
</evidence>
<evidence type="ECO:0000303" key="7">
    <source>
    </source>
</evidence>
<evidence type="ECO:0000303" key="8">
    <source>
    </source>
</evidence>
<evidence type="ECO:0000303" key="9">
    <source>
    </source>
</evidence>
<evidence type="ECO:0000305" key="10"/>
<evidence type="ECO:0007744" key="11">
    <source>
    </source>
</evidence>
<name>DHX30_MOUSE</name>
<feature type="chain" id="PRO_0000245539" description="ATP-dependent RNA helicase DHX30">
    <location>
        <begin position="1"/>
        <end position="1217"/>
    </location>
</feature>
<feature type="domain" description="DRBM">
    <location>
        <begin position="76"/>
        <end position="144"/>
    </location>
</feature>
<feature type="domain" description="Helicase ATP-binding" evidence="3">
    <location>
        <begin position="467"/>
        <end position="635"/>
    </location>
</feature>
<feature type="domain" description="Helicase C-terminal" evidence="4">
    <location>
        <begin position="677"/>
        <end position="850"/>
    </location>
</feature>
<feature type="region of interest" description="Disordered" evidence="5">
    <location>
        <begin position="176"/>
        <end position="223"/>
    </location>
</feature>
<feature type="short sequence motif" description="DEAH box">
    <location>
        <begin position="582"/>
        <end position="585"/>
    </location>
</feature>
<feature type="compositionally biased region" description="Acidic residues" evidence="5">
    <location>
        <begin position="211"/>
        <end position="223"/>
    </location>
</feature>
<feature type="binding site" evidence="3">
    <location>
        <begin position="480"/>
        <end position="487"/>
    </location>
    <ligand>
        <name>ATP</name>
        <dbReference type="ChEBI" id="CHEBI:30616"/>
    </ligand>
</feature>
<feature type="modified residue" description="Phosphoserine" evidence="2">
    <location>
        <position position="29"/>
    </location>
</feature>
<feature type="modified residue" description="Phosphoserine" evidence="11">
    <location>
        <position position="249"/>
    </location>
</feature>
<feature type="modified residue" description="Phosphoserine" evidence="2">
    <location>
        <position position="403"/>
    </location>
</feature>
<feature type="splice variant" id="VSP_019746" description="In isoform 3." evidence="7">
    <original>MVTPVCNSSTWQPKDSSFLSWPEMFSLDSFRKDRTQHRQRQCKLPPPRLPPMCVNPAPGGTITR</original>
    <variation>MAAARRLMALAAGVSPRLRPPDPLVASGRQGCSRGFSSSFVRSDGTQEAAEVESEVAPSEPGEGDGSMVN</variation>
    <location>
        <begin position="1"/>
        <end position="64"/>
    </location>
</feature>
<feature type="splice variant" id="VSP_019747" description="In isoform 2." evidence="8">
    <location>
        <begin position="1"/>
        <end position="23"/>
    </location>
</feature>
<feature type="sequence conflict" description="In Ref. 2; BAE27081." evidence="10" ref="2">
    <original>P</original>
    <variation>H</variation>
    <location>
        <position position="45"/>
    </location>
</feature>
<feature type="sequence conflict" description="In Ref. 2; BAE27081." evidence="10" ref="2">
    <original>V</original>
    <variation>G</variation>
    <location>
        <position position="83"/>
    </location>
</feature>
<feature type="sequence conflict" description="In Ref. 2; BAE27081." evidence="10" ref="2">
    <original>Q</original>
    <variation>E</variation>
    <location>
        <position position="142"/>
    </location>
</feature>
<feature type="sequence conflict" description="In Ref. 2; BAE27081." evidence="10" ref="2">
    <original>R</original>
    <variation>C</variation>
    <location>
        <position position="168"/>
    </location>
</feature>
<feature type="sequence conflict" description="In Ref. 2; BAE27081." evidence="10" ref="2">
    <original>E</original>
    <variation>D</variation>
    <location>
        <position position="180"/>
    </location>
</feature>
<feature type="sequence conflict" description="In Ref. 2; BAE27081." evidence="10" ref="2">
    <original>L</original>
    <variation>M</variation>
    <location>
        <position position="272"/>
    </location>
</feature>
<feature type="sequence conflict" description="In Ref. 2; BAE27081." evidence="10" ref="2">
    <original>D</original>
    <variation>G</variation>
    <location>
        <position position="342"/>
    </location>
</feature>
<feature type="sequence conflict" description="In Ref. 2; BAE27081/BAE32286." evidence="10" ref="2">
    <original>R</original>
    <variation>W</variation>
    <location>
        <position position="663"/>
    </location>
</feature>
<feature type="sequence conflict" description="In Ref. 2; BAE27081." evidence="10" ref="2">
    <original>K</original>
    <variation>R</variation>
    <location>
        <position position="783"/>
    </location>
</feature>
<feature type="sequence conflict" description="In Ref. 2; BAE27081." evidence="10" ref="2">
    <original>R</original>
    <variation>Q</variation>
    <location>
        <position position="822"/>
    </location>
</feature>
<feature type="sequence conflict" description="In Ref. 2; BAE27081." evidence="10" ref="2">
    <original>Y</original>
    <variation>H</variation>
    <location>
        <position position="991"/>
    </location>
</feature>
<feature type="sequence conflict" description="In Ref. 3; AAH16202." evidence="10" ref="3">
    <original>M</original>
    <variation>V</variation>
    <location>
        <position position="1211"/>
    </location>
</feature>
<feature type="modified residue" description="Phosphoserine" evidence="2">
    <location sequence="Q99PU8-3">
        <position position="15"/>
    </location>
</feature>